<proteinExistence type="evidence at transcript level"/>
<reference key="1">
    <citation type="journal article" date="2005" name="Nature">
        <title>The map-based sequence of the rice genome.</title>
        <authorList>
            <consortium name="International rice genome sequencing project (IRGSP)"/>
        </authorList>
    </citation>
    <scope>NUCLEOTIDE SEQUENCE [LARGE SCALE GENOMIC DNA]</scope>
    <source>
        <strain>cv. Nipponbare</strain>
    </source>
</reference>
<reference key="2">
    <citation type="journal article" date="2008" name="Nucleic Acids Res.">
        <title>The rice annotation project database (RAP-DB): 2008 update.</title>
        <authorList>
            <consortium name="The rice annotation project (RAP)"/>
        </authorList>
    </citation>
    <scope>GENOME REANNOTATION</scope>
    <source>
        <strain>cv. Nipponbare</strain>
    </source>
</reference>
<reference key="3">
    <citation type="journal article" date="2013" name="Rice">
        <title>Improvement of the Oryza sativa Nipponbare reference genome using next generation sequence and optical map data.</title>
        <authorList>
            <person name="Kawahara Y."/>
            <person name="de la Bastide M."/>
            <person name="Hamilton J.P."/>
            <person name="Kanamori H."/>
            <person name="McCombie W.R."/>
            <person name="Ouyang S."/>
            <person name="Schwartz D.C."/>
            <person name="Tanaka T."/>
            <person name="Wu J."/>
            <person name="Zhou S."/>
            <person name="Childs K.L."/>
            <person name="Davidson R.M."/>
            <person name="Lin H."/>
            <person name="Quesada-Ocampo L."/>
            <person name="Vaillancourt B."/>
            <person name="Sakai H."/>
            <person name="Lee S.S."/>
            <person name="Kim J."/>
            <person name="Numa H."/>
            <person name="Itoh T."/>
            <person name="Buell C.R."/>
            <person name="Matsumoto T."/>
        </authorList>
    </citation>
    <scope>GENOME REANNOTATION</scope>
    <source>
        <strain>cv. Nipponbare</strain>
    </source>
</reference>
<reference key="4">
    <citation type="journal article" date="2005" name="PLoS Biol.">
        <title>The genomes of Oryza sativa: a history of duplications.</title>
        <authorList>
            <person name="Yu J."/>
            <person name="Wang J."/>
            <person name="Lin W."/>
            <person name="Li S."/>
            <person name="Li H."/>
            <person name="Zhou J."/>
            <person name="Ni P."/>
            <person name="Dong W."/>
            <person name="Hu S."/>
            <person name="Zeng C."/>
            <person name="Zhang J."/>
            <person name="Zhang Y."/>
            <person name="Li R."/>
            <person name="Xu Z."/>
            <person name="Li S."/>
            <person name="Li X."/>
            <person name="Zheng H."/>
            <person name="Cong L."/>
            <person name="Lin L."/>
            <person name="Yin J."/>
            <person name="Geng J."/>
            <person name="Li G."/>
            <person name="Shi J."/>
            <person name="Liu J."/>
            <person name="Lv H."/>
            <person name="Li J."/>
            <person name="Wang J."/>
            <person name="Deng Y."/>
            <person name="Ran L."/>
            <person name="Shi X."/>
            <person name="Wang X."/>
            <person name="Wu Q."/>
            <person name="Li C."/>
            <person name="Ren X."/>
            <person name="Wang J."/>
            <person name="Wang X."/>
            <person name="Li D."/>
            <person name="Liu D."/>
            <person name="Zhang X."/>
            <person name="Ji Z."/>
            <person name="Zhao W."/>
            <person name="Sun Y."/>
            <person name="Zhang Z."/>
            <person name="Bao J."/>
            <person name="Han Y."/>
            <person name="Dong L."/>
            <person name="Ji J."/>
            <person name="Chen P."/>
            <person name="Wu S."/>
            <person name="Liu J."/>
            <person name="Xiao Y."/>
            <person name="Bu D."/>
            <person name="Tan J."/>
            <person name="Yang L."/>
            <person name="Ye C."/>
            <person name="Zhang J."/>
            <person name="Xu J."/>
            <person name="Zhou Y."/>
            <person name="Yu Y."/>
            <person name="Zhang B."/>
            <person name="Zhuang S."/>
            <person name="Wei H."/>
            <person name="Liu B."/>
            <person name="Lei M."/>
            <person name="Yu H."/>
            <person name="Li Y."/>
            <person name="Xu H."/>
            <person name="Wei S."/>
            <person name="He X."/>
            <person name="Fang L."/>
            <person name="Zhang Z."/>
            <person name="Zhang Y."/>
            <person name="Huang X."/>
            <person name="Su Z."/>
            <person name="Tong W."/>
            <person name="Li J."/>
            <person name="Tong Z."/>
            <person name="Li S."/>
            <person name="Ye J."/>
            <person name="Wang L."/>
            <person name="Fang L."/>
            <person name="Lei T."/>
            <person name="Chen C.-S."/>
            <person name="Chen H.-C."/>
            <person name="Xu Z."/>
            <person name="Li H."/>
            <person name="Huang H."/>
            <person name="Zhang F."/>
            <person name="Xu H."/>
            <person name="Li N."/>
            <person name="Zhao C."/>
            <person name="Li S."/>
            <person name="Dong L."/>
            <person name="Huang Y."/>
            <person name="Li L."/>
            <person name="Xi Y."/>
            <person name="Qi Q."/>
            <person name="Li W."/>
            <person name="Zhang B."/>
            <person name="Hu W."/>
            <person name="Zhang Y."/>
            <person name="Tian X."/>
            <person name="Jiao Y."/>
            <person name="Liang X."/>
            <person name="Jin J."/>
            <person name="Gao L."/>
            <person name="Zheng W."/>
            <person name="Hao B."/>
            <person name="Liu S.-M."/>
            <person name="Wang W."/>
            <person name="Yuan L."/>
            <person name="Cao M."/>
            <person name="McDermott J."/>
            <person name="Samudrala R."/>
            <person name="Wang J."/>
            <person name="Wong G.K.-S."/>
            <person name="Yang H."/>
        </authorList>
    </citation>
    <scope>NUCLEOTIDE SEQUENCE [LARGE SCALE GENOMIC DNA]</scope>
    <source>
        <strain>cv. Nipponbare</strain>
    </source>
</reference>
<reference key="5">
    <citation type="submission" date="2006-10" db="EMBL/GenBank/DDBJ databases">
        <title>Oryza sativa full length cDNA.</title>
        <authorList>
            <consortium name="The rice full-length cDNA consortium"/>
        </authorList>
    </citation>
    <scope>NUCLEOTIDE SEQUENCE [LARGE SCALE MRNA]</scope>
    <source>
        <strain>cv. Nipponbare</strain>
    </source>
</reference>
<reference key="6">
    <citation type="journal article" date="2009" name="Plant Physiol.">
        <title>A germin-like protein gene family functions as a complex quantitative trait locus conferring broad-spectrum disease resistance in rice.</title>
        <authorList>
            <person name="Manosalva P.M."/>
            <person name="Davidson R.M."/>
            <person name="Liu B."/>
            <person name="Zhu X."/>
            <person name="Hulbert S.H."/>
            <person name="Leung H."/>
            <person name="Leach J.E."/>
        </authorList>
    </citation>
    <scope>FUNCTION</scope>
</reference>
<comment type="function">
    <text evidence="3">Plays a role in broad-spectrum disease resistance. Probably has no oxalate oxidase activity even if the active site is conserved.</text>
</comment>
<comment type="subunit">
    <text evidence="1">Oligomer (believed to be a pentamer but probably hexamer).</text>
</comment>
<comment type="subcellular location">
    <subcellularLocation>
        <location evidence="1">Secreted</location>
        <location evidence="1">Extracellular space</location>
        <location evidence="1">Apoplast</location>
    </subcellularLocation>
</comment>
<comment type="miscellaneous">
    <text>Member of the 12 germin-like protein gene cluster located on chromosome 8 in the major-effect quantitative trait loci (QTL) for fungal blast resistance. Partial suppression of the 12 germin-like protein genes increases susceptibility to the fungal pathogens causing rice blast and sheath blight diseases.</text>
</comment>
<comment type="similarity">
    <text evidence="4">Belongs to the germin family.</text>
</comment>
<sequence>MASPSFCLLAALLALVSWQAIASDPSPLQDFCVADKHSPVLVNGFACLDPKYVTADHFFKAAMLDTPRKTNKVGSNVTLINVMQIPGLNTLGISIARIDYAPLGENPPHTHPRATEILTVLEGTLYVGFVTSNPNNTLFSKVLNKGDVFVFPEGLIHFQFNPNPHQPAVAIAALSSQNPGAITIANAVFGSKPPISDKVLAKAFQVEKGTIDWLQAQFWENNHY</sequence>
<protein>
    <recommendedName>
        <fullName>Germin-like protein 8-8</fullName>
    </recommendedName>
</protein>
<accession>Q6YZA1</accession>
<accession>A0A0P0XCG6</accession>
<accession>Q0J7I9</accession>
<dbReference type="EMBL" id="AP005505">
    <property type="protein sequence ID" value="BAD05737.1"/>
    <property type="molecule type" value="Genomic_DNA"/>
</dbReference>
<dbReference type="EMBL" id="AP005531">
    <property type="protein sequence ID" value="BAD05776.1"/>
    <property type="molecule type" value="Genomic_DNA"/>
</dbReference>
<dbReference type="EMBL" id="AP008214">
    <property type="protein sequence ID" value="BAF23076.2"/>
    <property type="molecule type" value="Genomic_DNA"/>
</dbReference>
<dbReference type="EMBL" id="AP014964">
    <property type="protein sequence ID" value="BAT04155.1"/>
    <property type="molecule type" value="Genomic_DNA"/>
</dbReference>
<dbReference type="EMBL" id="CM000145">
    <property type="protein sequence ID" value="EAZ41764.1"/>
    <property type="molecule type" value="Genomic_DNA"/>
</dbReference>
<dbReference type="EMBL" id="AK241043">
    <property type="protein sequence ID" value="BAH00937.1"/>
    <property type="molecule type" value="mRNA"/>
</dbReference>
<dbReference type="RefSeq" id="XP_015648995.1">
    <property type="nucleotide sequence ID" value="XM_015793509.1"/>
</dbReference>
<dbReference type="SMR" id="Q6YZA1"/>
<dbReference type="FunCoup" id="Q6YZA1">
    <property type="interactions" value="40"/>
</dbReference>
<dbReference type="STRING" id="39947.Q6YZA1"/>
<dbReference type="PaxDb" id="39947-Q6YZA1"/>
<dbReference type="EnsemblPlants" id="Os08t0189700-01">
    <property type="protein sequence ID" value="Os08t0189700-01"/>
    <property type="gene ID" value="Os08g0189700"/>
</dbReference>
<dbReference type="Gramene" id="Os08t0189700-01">
    <property type="protein sequence ID" value="Os08t0189700-01"/>
    <property type="gene ID" value="Os08g0189700"/>
</dbReference>
<dbReference type="KEGG" id="dosa:Os08g0189700"/>
<dbReference type="eggNOG" id="ENOG502QQ4A">
    <property type="taxonomic scope" value="Eukaryota"/>
</dbReference>
<dbReference type="HOGENOM" id="CLU_015790_0_0_1"/>
<dbReference type="InParanoid" id="Q6YZA1"/>
<dbReference type="OMA" id="PCKDAMA"/>
<dbReference type="OrthoDB" id="1850619at2759"/>
<dbReference type="Proteomes" id="UP000000763">
    <property type="component" value="Chromosome 8"/>
</dbReference>
<dbReference type="Proteomes" id="UP000007752">
    <property type="component" value="Chromosome 8"/>
</dbReference>
<dbReference type="Proteomes" id="UP000059680">
    <property type="component" value="Chromosome 8"/>
</dbReference>
<dbReference type="GO" id="GO:0048046">
    <property type="term" value="C:apoplast"/>
    <property type="evidence" value="ECO:0007669"/>
    <property type="project" value="UniProtKB-SubCell"/>
</dbReference>
<dbReference type="GO" id="GO:0030145">
    <property type="term" value="F:manganese ion binding"/>
    <property type="evidence" value="ECO:0007669"/>
    <property type="project" value="InterPro"/>
</dbReference>
<dbReference type="CDD" id="cd02241">
    <property type="entry name" value="cupin_OxOx"/>
    <property type="match status" value="1"/>
</dbReference>
<dbReference type="FunFam" id="2.60.120.10:FF:000005">
    <property type="entry name" value="Germin-like protein subfamily 1 member 8"/>
    <property type="match status" value="1"/>
</dbReference>
<dbReference type="Gene3D" id="2.60.120.10">
    <property type="entry name" value="Jelly Rolls"/>
    <property type="match status" value="1"/>
</dbReference>
<dbReference type="InterPro" id="IPR006045">
    <property type="entry name" value="Cupin_1"/>
</dbReference>
<dbReference type="InterPro" id="IPR001929">
    <property type="entry name" value="Germin"/>
</dbReference>
<dbReference type="InterPro" id="IPR019780">
    <property type="entry name" value="Germin_Mn-BS"/>
</dbReference>
<dbReference type="InterPro" id="IPR014710">
    <property type="entry name" value="RmlC-like_jellyroll"/>
</dbReference>
<dbReference type="InterPro" id="IPR011051">
    <property type="entry name" value="RmlC_Cupin_sf"/>
</dbReference>
<dbReference type="PANTHER" id="PTHR31238">
    <property type="entry name" value="GERMIN-LIKE PROTEIN SUBFAMILY 3 MEMBER 3"/>
    <property type="match status" value="1"/>
</dbReference>
<dbReference type="Pfam" id="PF00190">
    <property type="entry name" value="Cupin_1"/>
    <property type="match status" value="1"/>
</dbReference>
<dbReference type="PRINTS" id="PR00325">
    <property type="entry name" value="GERMIN"/>
</dbReference>
<dbReference type="SMART" id="SM00835">
    <property type="entry name" value="Cupin_1"/>
    <property type="match status" value="1"/>
</dbReference>
<dbReference type="SUPFAM" id="SSF51182">
    <property type="entry name" value="RmlC-like cupins"/>
    <property type="match status" value="1"/>
</dbReference>
<dbReference type="PROSITE" id="PS00725">
    <property type="entry name" value="GERMIN"/>
    <property type="match status" value="1"/>
</dbReference>
<evidence type="ECO:0000250" key="1"/>
<evidence type="ECO:0000255" key="2"/>
<evidence type="ECO:0000269" key="3">
    <source>
    </source>
</evidence>
<evidence type="ECO:0000305" key="4"/>
<feature type="signal peptide" evidence="2">
    <location>
        <begin position="1"/>
        <end position="22"/>
    </location>
</feature>
<feature type="chain" id="PRO_0000365520" description="Germin-like protein 8-8">
    <location>
        <begin position="23"/>
        <end position="224"/>
    </location>
</feature>
<feature type="domain" description="Cupin type-1" evidence="2">
    <location>
        <begin position="62"/>
        <end position="212"/>
    </location>
</feature>
<feature type="binding site" evidence="1">
    <location>
        <position position="109"/>
    </location>
    <ligand>
        <name>Mn(2+)</name>
        <dbReference type="ChEBI" id="CHEBI:29035"/>
    </ligand>
</feature>
<feature type="binding site" evidence="1">
    <location>
        <position position="111"/>
    </location>
    <ligand>
        <name>Mn(2+)</name>
        <dbReference type="ChEBI" id="CHEBI:29035"/>
    </ligand>
</feature>
<feature type="binding site" evidence="1">
    <location>
        <position position="116"/>
    </location>
    <ligand>
        <name>Mn(2+)</name>
        <dbReference type="ChEBI" id="CHEBI:29035"/>
    </ligand>
</feature>
<feature type="binding site" evidence="1">
    <location>
        <position position="157"/>
    </location>
    <ligand>
        <name>Mn(2+)</name>
        <dbReference type="ChEBI" id="CHEBI:29035"/>
    </ligand>
</feature>
<feature type="glycosylation site" description="N-linked (GlcNAc...) asparagine" evidence="2">
    <location>
        <position position="76"/>
    </location>
</feature>
<feature type="glycosylation site" description="N-linked (GlcNAc...) asparagine" evidence="2">
    <location>
        <position position="135"/>
    </location>
</feature>
<feature type="disulfide bond" evidence="1">
    <location>
        <begin position="32"/>
        <end position="47"/>
    </location>
</feature>
<gene>
    <name type="ordered locus">Os08g0189700</name>
    <name type="ordered locus">LOC_Os08g09020</name>
    <name type="ORF">B1099H05.34</name>
    <name type="ORF">OsJ_025247</name>
    <name type="ORF">P0610E02.10</name>
</gene>
<organism>
    <name type="scientific">Oryza sativa subsp. japonica</name>
    <name type="common">Rice</name>
    <dbReference type="NCBI Taxonomy" id="39947"/>
    <lineage>
        <taxon>Eukaryota</taxon>
        <taxon>Viridiplantae</taxon>
        <taxon>Streptophyta</taxon>
        <taxon>Embryophyta</taxon>
        <taxon>Tracheophyta</taxon>
        <taxon>Spermatophyta</taxon>
        <taxon>Magnoliopsida</taxon>
        <taxon>Liliopsida</taxon>
        <taxon>Poales</taxon>
        <taxon>Poaceae</taxon>
        <taxon>BOP clade</taxon>
        <taxon>Oryzoideae</taxon>
        <taxon>Oryzeae</taxon>
        <taxon>Oryzinae</taxon>
        <taxon>Oryza</taxon>
        <taxon>Oryza sativa</taxon>
    </lineage>
</organism>
<name>GL88_ORYSJ</name>
<keyword id="KW-0052">Apoplast</keyword>
<keyword id="KW-1015">Disulfide bond</keyword>
<keyword id="KW-0325">Glycoprotein</keyword>
<keyword id="KW-0464">Manganese</keyword>
<keyword id="KW-0479">Metal-binding</keyword>
<keyword id="KW-1185">Reference proteome</keyword>
<keyword id="KW-0964">Secreted</keyword>
<keyword id="KW-0732">Signal</keyword>